<keyword id="KW-0143">Chaperone</keyword>
<keyword id="KW-1015">Disulfide bond</keyword>
<keyword id="KW-0472">Membrane</keyword>
<keyword id="KW-0479">Metal-binding</keyword>
<keyword id="KW-0496">Mitochondrion</keyword>
<keyword id="KW-0999">Mitochondrion inner membrane</keyword>
<keyword id="KW-0653">Protein transport</keyword>
<keyword id="KW-1185">Reference proteome</keyword>
<keyword id="KW-0811">Translocation</keyword>
<keyword id="KW-0813">Transport</keyword>
<keyword id="KW-0862">Zinc</keyword>
<sequence length="83" mass="9482">MDSADPQLARFLHQLQAETQRQKFTEQVHTLTGRCWDVCFSDYRPPSKMDGKTQTCIQNCVNRMIDASNFMVEHLSKMNGGSA</sequence>
<gene>
    <name evidence="6" type="primary">ddp-1</name>
    <name evidence="3" type="synonym">tim-3</name>
    <name evidence="6" type="ORF">CBG15185</name>
</gene>
<accession>Q616Q2</accession>
<accession>A8XLR0</accession>
<name>TIM8_CAEBR</name>
<feature type="chain" id="PRO_0000228026" description="Mitochondrial import inner membrane translocase subunit Tim8">
    <location>
        <begin position="1"/>
        <end position="83"/>
    </location>
</feature>
<feature type="short sequence motif" description="Twin CX3C motif" evidence="1">
    <location>
        <begin position="35"/>
        <end position="60"/>
    </location>
</feature>
<feature type="disulfide bond" evidence="1">
    <location>
        <begin position="35"/>
        <end position="60"/>
    </location>
</feature>
<feature type="disulfide bond" evidence="1">
    <location>
        <begin position="39"/>
        <end position="56"/>
    </location>
</feature>
<evidence type="ECO:0000250" key="1">
    <source>
        <dbReference type="UniProtKB" id="O74700"/>
    </source>
</evidence>
<evidence type="ECO:0000250" key="2">
    <source>
        <dbReference type="UniProtKB" id="Q17754"/>
    </source>
</evidence>
<evidence type="ECO:0000250" key="3">
    <source>
        <dbReference type="UniProtKB" id="Q9N408"/>
    </source>
</evidence>
<evidence type="ECO:0000250" key="4">
    <source>
        <dbReference type="UniProtKB" id="Q9Y1A3"/>
    </source>
</evidence>
<evidence type="ECO:0000305" key="5"/>
<evidence type="ECO:0000312" key="6">
    <source>
        <dbReference type="WormBase" id="CBG15185"/>
    </source>
</evidence>
<organism>
    <name type="scientific">Caenorhabditis briggsae</name>
    <dbReference type="NCBI Taxonomy" id="6238"/>
    <lineage>
        <taxon>Eukaryota</taxon>
        <taxon>Metazoa</taxon>
        <taxon>Ecdysozoa</taxon>
        <taxon>Nematoda</taxon>
        <taxon>Chromadorea</taxon>
        <taxon>Rhabditida</taxon>
        <taxon>Rhabditina</taxon>
        <taxon>Rhabditomorpha</taxon>
        <taxon>Rhabditoidea</taxon>
        <taxon>Rhabditidae</taxon>
        <taxon>Peloderinae</taxon>
        <taxon>Caenorhabditis</taxon>
    </lineage>
</organism>
<proteinExistence type="inferred from homology"/>
<dbReference type="EMBL" id="HE601055">
    <property type="protein sequence ID" value="CAP33564.1"/>
    <property type="molecule type" value="Genomic_DNA"/>
</dbReference>
<dbReference type="SMR" id="Q616Q2"/>
<dbReference type="FunCoup" id="Q616Q2">
    <property type="interactions" value="1435"/>
</dbReference>
<dbReference type="STRING" id="6238.Q616Q2"/>
<dbReference type="EnsemblMetazoa" id="CBG15185.1">
    <property type="protein sequence ID" value="CBG15185.1"/>
    <property type="gene ID" value="WBGene00035508"/>
</dbReference>
<dbReference type="KEGG" id="cbr:CBG_15185"/>
<dbReference type="CTD" id="8584903"/>
<dbReference type="WormBase" id="CBG15185">
    <property type="protein sequence ID" value="CBP23176"/>
    <property type="gene ID" value="WBGene00035508"/>
    <property type="gene designation" value="Cbr-ddp-1"/>
</dbReference>
<dbReference type="eggNOG" id="KOG3489">
    <property type="taxonomic scope" value="Eukaryota"/>
</dbReference>
<dbReference type="HOGENOM" id="CLU_141397_1_2_1"/>
<dbReference type="InParanoid" id="Q616Q2"/>
<dbReference type="OMA" id="DLCYTGT"/>
<dbReference type="OrthoDB" id="344165at2759"/>
<dbReference type="Proteomes" id="UP000008549">
    <property type="component" value="Unassembled WGS sequence"/>
</dbReference>
<dbReference type="GO" id="GO:0005743">
    <property type="term" value="C:mitochondrial inner membrane"/>
    <property type="evidence" value="ECO:0007669"/>
    <property type="project" value="UniProtKB-SubCell"/>
</dbReference>
<dbReference type="GO" id="GO:0046872">
    <property type="term" value="F:metal ion binding"/>
    <property type="evidence" value="ECO:0007669"/>
    <property type="project" value="UniProtKB-KW"/>
</dbReference>
<dbReference type="GO" id="GO:0007005">
    <property type="term" value="P:mitochondrion organization"/>
    <property type="evidence" value="ECO:0007669"/>
    <property type="project" value="EnsemblMetazoa"/>
</dbReference>
<dbReference type="GO" id="GO:0015031">
    <property type="term" value="P:protein transport"/>
    <property type="evidence" value="ECO:0007669"/>
    <property type="project" value="UniProtKB-KW"/>
</dbReference>
<dbReference type="Gene3D" id="1.10.287.810">
    <property type="entry name" value="Mitochondrial import inner membrane translocase subunit tim13 like domains"/>
    <property type="match status" value="1"/>
</dbReference>
<dbReference type="InterPro" id="IPR004217">
    <property type="entry name" value="Tim10-like"/>
</dbReference>
<dbReference type="InterPro" id="IPR035427">
    <property type="entry name" value="Tim10-like_dom_sf"/>
</dbReference>
<dbReference type="Pfam" id="PF02953">
    <property type="entry name" value="zf-Tim10_DDP"/>
    <property type="match status" value="1"/>
</dbReference>
<dbReference type="SUPFAM" id="SSF144122">
    <property type="entry name" value="Tim10-like"/>
    <property type="match status" value="1"/>
</dbReference>
<protein>
    <recommendedName>
        <fullName evidence="4">Mitochondrial import inner membrane translocase subunit Tim8</fullName>
    </recommendedName>
</protein>
<reference key="1">
    <citation type="journal article" date="2003" name="PLoS Biol.">
        <title>The genome sequence of Caenorhabditis briggsae: a platform for comparative genomics.</title>
        <authorList>
            <person name="Stein L.D."/>
            <person name="Bao Z."/>
            <person name="Blasiar D."/>
            <person name="Blumenthal T."/>
            <person name="Brent M.R."/>
            <person name="Chen N."/>
            <person name="Chinwalla A."/>
            <person name="Clarke L."/>
            <person name="Clee C."/>
            <person name="Coghlan A."/>
            <person name="Coulson A."/>
            <person name="D'Eustachio P."/>
            <person name="Fitch D.H.A."/>
            <person name="Fulton L.A."/>
            <person name="Fulton R.E."/>
            <person name="Griffiths-Jones S."/>
            <person name="Harris T.W."/>
            <person name="Hillier L.W."/>
            <person name="Kamath R."/>
            <person name="Kuwabara P.E."/>
            <person name="Mardis E.R."/>
            <person name="Marra M.A."/>
            <person name="Miner T.L."/>
            <person name="Minx P."/>
            <person name="Mullikin J.C."/>
            <person name="Plumb R.W."/>
            <person name="Rogers J."/>
            <person name="Schein J.E."/>
            <person name="Sohrmann M."/>
            <person name="Spieth J."/>
            <person name="Stajich J.E."/>
            <person name="Wei C."/>
            <person name="Willey D."/>
            <person name="Wilson R.K."/>
            <person name="Durbin R.M."/>
            <person name="Waterston R.H."/>
        </authorList>
    </citation>
    <scope>NUCLEOTIDE SEQUENCE [LARGE SCALE GENOMIC DNA]</scope>
    <source>
        <strain>AF16</strain>
    </source>
</reference>
<comment type="function">
    <text evidence="2 3">Mitochondrial intermembrane chaperone that participates in the import and insertion of some multi-pass transmembrane proteins into the mitochondrial inner membrane. Also required for the transfer of beta-barrel precursors from the TOM complex to the sorting and assembly machinery (SAM complex) of the outer membrane. Acts as a chaperone-like protein that protects the hydrophobic precursors from aggregation and guide them through the mitochondrial intermembrane space. The ddp-1/tim-8-tim-13 complex mediates the import of some proteins while the predominant tim-9/tin-9.1-tim-10/tin-10 70 kDa complex mediates the import of much more proteins.</text>
</comment>
<comment type="subunit">
    <text evidence="1">Heterohexamer; composed of 3 copies of ddp-1/tim-8 and 3 copies of tin-13/tim-13, named soluble 70 kDa complex. Associates with the TIM22 complex, whose core is composed of tim-22 (By similarity).</text>
</comment>
<comment type="subcellular location">
    <subcellularLocation>
        <location evidence="1">Mitochondrion inner membrane</location>
        <topology evidence="1">Peripheral membrane protein</topology>
        <orientation evidence="1">Intermembrane side</orientation>
    </subcellularLocation>
</comment>
<comment type="domain">
    <text evidence="1">The twin CX3C motif contains 4 conserved Cys residues that form 2 disulfide bonds in the mitochondrial intermembrane space. However, during the transit of ddp-1/tim-8 from cytoplasm into mitochondrion, the Cys residues probably coordinate zinc, thereby preventing folding and allowing its transfer across mitochondrial outer membrane.</text>
</comment>
<comment type="similarity">
    <text evidence="5">Belongs to the small Tim family.</text>
</comment>